<dbReference type="EMBL" id="CU928145">
    <property type="protein sequence ID" value="CAV00643.1"/>
    <property type="molecule type" value="Genomic_DNA"/>
</dbReference>
<dbReference type="SMR" id="B7L757"/>
<dbReference type="KEGG" id="eck:EC55989_4103"/>
<dbReference type="HOGENOM" id="CLU_073529_0_1_6"/>
<dbReference type="Proteomes" id="UP000000746">
    <property type="component" value="Chromosome"/>
</dbReference>
<dbReference type="GO" id="GO:0046872">
    <property type="term" value="F:metal ion binding"/>
    <property type="evidence" value="ECO:0007669"/>
    <property type="project" value="UniProtKB-KW"/>
</dbReference>
<dbReference type="GO" id="GO:0008237">
    <property type="term" value="F:metallopeptidase activity"/>
    <property type="evidence" value="ECO:0007669"/>
    <property type="project" value="UniProtKB-KW"/>
</dbReference>
<dbReference type="GO" id="GO:0006508">
    <property type="term" value="P:proteolysis"/>
    <property type="evidence" value="ECO:0007669"/>
    <property type="project" value="UniProtKB-KW"/>
</dbReference>
<dbReference type="CDD" id="cd08071">
    <property type="entry name" value="MPN_DUF2466"/>
    <property type="match status" value="1"/>
</dbReference>
<dbReference type="Gene3D" id="3.40.140.10">
    <property type="entry name" value="Cytidine Deaminase, domain 2"/>
    <property type="match status" value="1"/>
</dbReference>
<dbReference type="HAMAP" id="MF_00018">
    <property type="entry name" value="UPF0758_YicR"/>
    <property type="match status" value="1"/>
</dbReference>
<dbReference type="InterPro" id="IPR037518">
    <property type="entry name" value="MPN"/>
</dbReference>
<dbReference type="InterPro" id="IPR025657">
    <property type="entry name" value="RadC_JAB"/>
</dbReference>
<dbReference type="InterPro" id="IPR010994">
    <property type="entry name" value="RuvA_2-like"/>
</dbReference>
<dbReference type="InterPro" id="IPR001405">
    <property type="entry name" value="UPF0758"/>
</dbReference>
<dbReference type="InterPro" id="IPR020891">
    <property type="entry name" value="UPF0758_CS"/>
</dbReference>
<dbReference type="InterPro" id="IPR046778">
    <property type="entry name" value="UPF0758_N"/>
</dbReference>
<dbReference type="InterPro" id="IPR022820">
    <property type="entry name" value="UPF0758_YicR"/>
</dbReference>
<dbReference type="NCBIfam" id="NF000642">
    <property type="entry name" value="PRK00024.1"/>
    <property type="match status" value="1"/>
</dbReference>
<dbReference type="NCBIfam" id="TIGR00608">
    <property type="entry name" value="radc"/>
    <property type="match status" value="1"/>
</dbReference>
<dbReference type="PANTHER" id="PTHR30471">
    <property type="entry name" value="DNA REPAIR PROTEIN RADC"/>
    <property type="match status" value="1"/>
</dbReference>
<dbReference type="PANTHER" id="PTHR30471:SF3">
    <property type="entry name" value="UPF0758 PROTEIN YEES-RELATED"/>
    <property type="match status" value="1"/>
</dbReference>
<dbReference type="Pfam" id="PF04002">
    <property type="entry name" value="RadC"/>
    <property type="match status" value="1"/>
</dbReference>
<dbReference type="Pfam" id="PF20582">
    <property type="entry name" value="UPF0758_N"/>
    <property type="match status" value="1"/>
</dbReference>
<dbReference type="SUPFAM" id="SSF47781">
    <property type="entry name" value="RuvA domain 2-like"/>
    <property type="match status" value="1"/>
</dbReference>
<dbReference type="PROSITE" id="PS50249">
    <property type="entry name" value="MPN"/>
    <property type="match status" value="1"/>
</dbReference>
<dbReference type="PROSITE" id="PS01302">
    <property type="entry name" value="UPF0758"/>
    <property type="match status" value="1"/>
</dbReference>
<proteinExistence type="inferred from homology"/>
<keyword id="KW-0378">Hydrolase</keyword>
<keyword id="KW-0479">Metal-binding</keyword>
<keyword id="KW-0482">Metalloprotease</keyword>
<keyword id="KW-0645">Protease</keyword>
<keyword id="KW-1185">Reference proteome</keyword>
<keyword id="KW-0862">Zinc</keyword>
<protein>
    <recommendedName>
        <fullName evidence="1">UPF0758 protein YicR</fullName>
    </recommendedName>
</protein>
<reference key="1">
    <citation type="journal article" date="2009" name="PLoS Genet.">
        <title>Organised genome dynamics in the Escherichia coli species results in highly diverse adaptive paths.</title>
        <authorList>
            <person name="Touchon M."/>
            <person name="Hoede C."/>
            <person name="Tenaillon O."/>
            <person name="Barbe V."/>
            <person name="Baeriswyl S."/>
            <person name="Bidet P."/>
            <person name="Bingen E."/>
            <person name="Bonacorsi S."/>
            <person name="Bouchier C."/>
            <person name="Bouvet O."/>
            <person name="Calteau A."/>
            <person name="Chiapello H."/>
            <person name="Clermont O."/>
            <person name="Cruveiller S."/>
            <person name="Danchin A."/>
            <person name="Diard M."/>
            <person name="Dossat C."/>
            <person name="Karoui M.E."/>
            <person name="Frapy E."/>
            <person name="Garry L."/>
            <person name="Ghigo J.M."/>
            <person name="Gilles A.M."/>
            <person name="Johnson J."/>
            <person name="Le Bouguenec C."/>
            <person name="Lescat M."/>
            <person name="Mangenot S."/>
            <person name="Martinez-Jehanne V."/>
            <person name="Matic I."/>
            <person name="Nassif X."/>
            <person name="Oztas S."/>
            <person name="Petit M.A."/>
            <person name="Pichon C."/>
            <person name="Rouy Z."/>
            <person name="Ruf C.S."/>
            <person name="Schneider D."/>
            <person name="Tourret J."/>
            <person name="Vacherie B."/>
            <person name="Vallenet D."/>
            <person name="Medigue C."/>
            <person name="Rocha E.P.C."/>
            <person name="Denamur E."/>
        </authorList>
    </citation>
    <scope>NUCLEOTIDE SEQUENCE [LARGE SCALE GENOMIC DNA]</scope>
    <source>
        <strain>55989 / EAEC</strain>
    </source>
</reference>
<organism>
    <name type="scientific">Escherichia coli (strain 55989 / EAEC)</name>
    <dbReference type="NCBI Taxonomy" id="585055"/>
    <lineage>
        <taxon>Bacteria</taxon>
        <taxon>Pseudomonadati</taxon>
        <taxon>Pseudomonadota</taxon>
        <taxon>Gammaproteobacteria</taxon>
        <taxon>Enterobacterales</taxon>
        <taxon>Enterobacteriaceae</taxon>
        <taxon>Escherichia</taxon>
    </lineage>
</organism>
<accession>B7L757</accession>
<gene>
    <name evidence="1" type="primary">yicR</name>
    <name type="ordered locus">EC55989_4103</name>
</gene>
<comment type="similarity">
    <text evidence="1">Belongs to the UPF0758 family. YicR subfamily.</text>
</comment>
<feature type="chain" id="PRO_1000195295" description="UPF0758 protein YicR">
    <location>
        <begin position="1"/>
        <end position="222"/>
    </location>
</feature>
<feature type="domain" description="MPN" evidence="2">
    <location>
        <begin position="100"/>
        <end position="222"/>
    </location>
</feature>
<feature type="short sequence motif" description="JAMM motif" evidence="2">
    <location>
        <begin position="171"/>
        <end position="184"/>
    </location>
</feature>
<feature type="binding site" evidence="2">
    <location>
        <position position="171"/>
    </location>
    <ligand>
        <name>Zn(2+)</name>
        <dbReference type="ChEBI" id="CHEBI:29105"/>
        <note>catalytic</note>
    </ligand>
</feature>
<feature type="binding site" evidence="2">
    <location>
        <position position="173"/>
    </location>
    <ligand>
        <name>Zn(2+)</name>
        <dbReference type="ChEBI" id="CHEBI:29105"/>
        <note>catalytic</note>
    </ligand>
</feature>
<feature type="binding site" evidence="2">
    <location>
        <position position="184"/>
    </location>
    <ligand>
        <name>Zn(2+)</name>
        <dbReference type="ChEBI" id="CHEBI:29105"/>
        <note>catalytic</note>
    </ligand>
</feature>
<name>YICR_ECO55</name>
<sequence>MKNNSQLLMPREKMLKFGISALTDVELLALFLRTGTRGKDVLTLAKEMLENFGSLYGLLTSEYEQFSGVHGIGVAKFAQLKGIAELARRYYNVRMREESPLLSPEMTREFLQSQLTGEEREIFMVIFLDSQHRVITHSRLFSGTLNHVEVHPREIIREAIKINASALILAHNHPSGCAEPSKADKLITERIIKSCQFMDLRVLDHIVIGRGEYVSFAERGWI</sequence>
<evidence type="ECO:0000255" key="1">
    <source>
        <dbReference type="HAMAP-Rule" id="MF_00018"/>
    </source>
</evidence>
<evidence type="ECO:0000255" key="2">
    <source>
        <dbReference type="PROSITE-ProRule" id="PRU01182"/>
    </source>
</evidence>